<comment type="function">
    <text evidence="1">Hydrolyzes ribosome-free peptidyl-tRNAs (with 1 or more amino acids incorporated), which drop off the ribosome during protein synthesis, or as a result of ribosome stalling.</text>
</comment>
<comment type="function">
    <text evidence="1">Catalyzes the release of premature peptidyl moieties from peptidyl-tRNA molecules trapped in stalled 50S ribosomal subunits, and thus maintains levels of free tRNAs and 50S ribosomes.</text>
</comment>
<comment type="catalytic activity">
    <reaction evidence="1">
        <text>an N-acyl-L-alpha-aminoacyl-tRNA + H2O = an N-acyl-L-amino acid + a tRNA + H(+)</text>
        <dbReference type="Rhea" id="RHEA:54448"/>
        <dbReference type="Rhea" id="RHEA-COMP:10123"/>
        <dbReference type="Rhea" id="RHEA-COMP:13883"/>
        <dbReference type="ChEBI" id="CHEBI:15377"/>
        <dbReference type="ChEBI" id="CHEBI:15378"/>
        <dbReference type="ChEBI" id="CHEBI:59874"/>
        <dbReference type="ChEBI" id="CHEBI:78442"/>
        <dbReference type="ChEBI" id="CHEBI:138191"/>
        <dbReference type="EC" id="3.1.1.29"/>
    </reaction>
</comment>
<comment type="subunit">
    <text evidence="1">Monomer.</text>
</comment>
<comment type="subcellular location">
    <subcellularLocation>
        <location evidence="1">Cytoplasm</location>
    </subcellularLocation>
</comment>
<comment type="similarity">
    <text evidence="1">Belongs to the PTH family.</text>
</comment>
<evidence type="ECO:0000255" key="1">
    <source>
        <dbReference type="HAMAP-Rule" id="MF_00083"/>
    </source>
</evidence>
<evidence type="ECO:0000256" key="2">
    <source>
        <dbReference type="SAM" id="MobiDB-lite"/>
    </source>
</evidence>
<name>PTH_BRUME</name>
<gene>
    <name evidence="1" type="primary">pth</name>
    <name type="ordered locus">BMEI0480</name>
</gene>
<dbReference type="EC" id="3.1.1.29" evidence="1"/>
<dbReference type="EMBL" id="AE008917">
    <property type="protein sequence ID" value="AAL51661.1"/>
    <property type="molecule type" value="Genomic_DNA"/>
</dbReference>
<dbReference type="PIR" id="AB3312">
    <property type="entry name" value="AB3312"/>
</dbReference>
<dbReference type="RefSeq" id="WP_002967832.1">
    <property type="nucleotide sequence ID" value="NZ_GG703780.1"/>
</dbReference>
<dbReference type="SMR" id="P65863"/>
<dbReference type="GeneID" id="97533278"/>
<dbReference type="KEGG" id="bme:BMEI0480"/>
<dbReference type="KEGG" id="bmel:DK63_942"/>
<dbReference type="PATRIC" id="fig|224914.52.peg.995"/>
<dbReference type="eggNOG" id="COG0193">
    <property type="taxonomic scope" value="Bacteria"/>
</dbReference>
<dbReference type="PhylomeDB" id="P65863"/>
<dbReference type="Proteomes" id="UP000000419">
    <property type="component" value="Chromosome I"/>
</dbReference>
<dbReference type="GO" id="GO:0005737">
    <property type="term" value="C:cytoplasm"/>
    <property type="evidence" value="ECO:0007669"/>
    <property type="project" value="UniProtKB-SubCell"/>
</dbReference>
<dbReference type="GO" id="GO:0004045">
    <property type="term" value="F:peptidyl-tRNA hydrolase activity"/>
    <property type="evidence" value="ECO:0007669"/>
    <property type="project" value="UniProtKB-UniRule"/>
</dbReference>
<dbReference type="GO" id="GO:0000049">
    <property type="term" value="F:tRNA binding"/>
    <property type="evidence" value="ECO:0007669"/>
    <property type="project" value="UniProtKB-UniRule"/>
</dbReference>
<dbReference type="GO" id="GO:0006515">
    <property type="term" value="P:protein quality control for misfolded or incompletely synthesized proteins"/>
    <property type="evidence" value="ECO:0007669"/>
    <property type="project" value="UniProtKB-UniRule"/>
</dbReference>
<dbReference type="GO" id="GO:0072344">
    <property type="term" value="P:rescue of stalled ribosome"/>
    <property type="evidence" value="ECO:0007669"/>
    <property type="project" value="UniProtKB-UniRule"/>
</dbReference>
<dbReference type="CDD" id="cd00462">
    <property type="entry name" value="PTH"/>
    <property type="match status" value="1"/>
</dbReference>
<dbReference type="FunFam" id="3.40.50.1470:FF:000001">
    <property type="entry name" value="Peptidyl-tRNA hydrolase"/>
    <property type="match status" value="1"/>
</dbReference>
<dbReference type="Gene3D" id="3.40.50.1470">
    <property type="entry name" value="Peptidyl-tRNA hydrolase"/>
    <property type="match status" value="1"/>
</dbReference>
<dbReference type="HAMAP" id="MF_00083">
    <property type="entry name" value="Pept_tRNA_hydro_bact"/>
    <property type="match status" value="1"/>
</dbReference>
<dbReference type="InterPro" id="IPR001328">
    <property type="entry name" value="Pept_tRNA_hydro"/>
</dbReference>
<dbReference type="InterPro" id="IPR018171">
    <property type="entry name" value="Pept_tRNA_hydro_CS"/>
</dbReference>
<dbReference type="InterPro" id="IPR036416">
    <property type="entry name" value="Pept_tRNA_hydro_sf"/>
</dbReference>
<dbReference type="NCBIfam" id="TIGR00447">
    <property type="entry name" value="pth"/>
    <property type="match status" value="1"/>
</dbReference>
<dbReference type="PANTHER" id="PTHR17224">
    <property type="entry name" value="PEPTIDYL-TRNA HYDROLASE"/>
    <property type="match status" value="1"/>
</dbReference>
<dbReference type="PANTHER" id="PTHR17224:SF1">
    <property type="entry name" value="PEPTIDYL-TRNA HYDROLASE"/>
    <property type="match status" value="1"/>
</dbReference>
<dbReference type="Pfam" id="PF01195">
    <property type="entry name" value="Pept_tRNA_hydro"/>
    <property type="match status" value="1"/>
</dbReference>
<dbReference type="SUPFAM" id="SSF53178">
    <property type="entry name" value="Peptidyl-tRNA hydrolase-like"/>
    <property type="match status" value="1"/>
</dbReference>
<dbReference type="PROSITE" id="PS01195">
    <property type="entry name" value="PEPT_TRNA_HYDROL_1"/>
    <property type="match status" value="1"/>
</dbReference>
<dbReference type="PROSITE" id="PS01196">
    <property type="entry name" value="PEPT_TRNA_HYDROL_2"/>
    <property type="match status" value="1"/>
</dbReference>
<feature type="chain" id="PRO_0000187705" description="Peptidyl-tRNA hydrolase">
    <location>
        <begin position="1"/>
        <end position="250"/>
    </location>
</feature>
<feature type="region of interest" description="Disordered" evidence="2">
    <location>
        <begin position="192"/>
        <end position="250"/>
    </location>
</feature>
<feature type="compositionally biased region" description="Polar residues" evidence="2">
    <location>
        <begin position="219"/>
        <end position="229"/>
    </location>
</feature>
<feature type="compositionally biased region" description="Basic and acidic residues" evidence="2">
    <location>
        <begin position="241"/>
        <end position="250"/>
    </location>
</feature>
<feature type="active site" description="Proton acceptor" evidence="1">
    <location>
        <position position="19"/>
    </location>
</feature>
<feature type="binding site" evidence="1">
    <location>
        <position position="14"/>
    </location>
    <ligand>
        <name>tRNA</name>
        <dbReference type="ChEBI" id="CHEBI:17843"/>
    </ligand>
</feature>
<feature type="binding site" evidence="1">
    <location>
        <position position="64"/>
    </location>
    <ligand>
        <name>tRNA</name>
        <dbReference type="ChEBI" id="CHEBI:17843"/>
    </ligand>
</feature>
<feature type="binding site" evidence="1">
    <location>
        <position position="66"/>
    </location>
    <ligand>
        <name>tRNA</name>
        <dbReference type="ChEBI" id="CHEBI:17843"/>
    </ligand>
</feature>
<feature type="binding site" evidence="1">
    <location>
        <position position="112"/>
    </location>
    <ligand>
        <name>tRNA</name>
        <dbReference type="ChEBI" id="CHEBI:17843"/>
    </ligand>
</feature>
<feature type="site" description="Discriminates between blocked and unblocked aminoacyl-tRNA" evidence="1">
    <location>
        <position position="9"/>
    </location>
</feature>
<feature type="site" description="Stabilizes the basic form of H active site to accept a proton" evidence="1">
    <location>
        <position position="91"/>
    </location>
</feature>
<keyword id="KW-0963">Cytoplasm</keyword>
<keyword id="KW-0378">Hydrolase</keyword>
<keyword id="KW-0694">RNA-binding</keyword>
<keyword id="KW-0820">tRNA-binding</keyword>
<organism>
    <name type="scientific">Brucella melitensis biotype 1 (strain ATCC 23456 / CCUG 17765 / NCTC 10094 / 16M)</name>
    <dbReference type="NCBI Taxonomy" id="224914"/>
    <lineage>
        <taxon>Bacteria</taxon>
        <taxon>Pseudomonadati</taxon>
        <taxon>Pseudomonadota</taxon>
        <taxon>Alphaproteobacteria</taxon>
        <taxon>Hyphomicrobiales</taxon>
        <taxon>Brucellaceae</taxon>
        <taxon>Brucella/Ochrobactrum group</taxon>
        <taxon>Brucella</taxon>
    </lineage>
</organism>
<proteinExistence type="inferred from homology"/>
<sequence>MLLIAGLGNPGPQYAHNRHNIGFMAADEIFRRHRFSNWQKKFQAEIADGVIDGEKVLLVKPQTFMNLSGQSIGEAMRFYKLTPADLVVIYDELDLVPGKLRIKTGGGSGGHNGIKSIDAHMQSFPGGQNYRRMRLGIGHPGAKELVHNYVLGDFAKADNEWLDTLMGAVADNVAMLARREDNSFMNRIALAMGDGNQRPGGVKTDPAQLEKAPPKAQSHIRQARQNQKKPNIPESGPMAEMLKKLLGKKD</sequence>
<protein>
    <recommendedName>
        <fullName evidence="1">Peptidyl-tRNA hydrolase</fullName>
        <shortName evidence="1">Pth</shortName>
        <ecNumber evidence="1">3.1.1.29</ecNumber>
    </recommendedName>
</protein>
<accession>P65863</accession>
<accession>Q8YIG4</accession>
<reference key="1">
    <citation type="journal article" date="2002" name="Proc. Natl. Acad. Sci. U.S.A.">
        <title>The genome sequence of the facultative intracellular pathogen Brucella melitensis.</title>
        <authorList>
            <person name="DelVecchio V.G."/>
            <person name="Kapatral V."/>
            <person name="Redkar R.J."/>
            <person name="Patra G."/>
            <person name="Mujer C."/>
            <person name="Los T."/>
            <person name="Ivanova N."/>
            <person name="Anderson I."/>
            <person name="Bhattacharyya A."/>
            <person name="Lykidis A."/>
            <person name="Reznik G."/>
            <person name="Jablonski L."/>
            <person name="Larsen N."/>
            <person name="D'Souza M."/>
            <person name="Bernal A."/>
            <person name="Mazur M."/>
            <person name="Goltsman E."/>
            <person name="Selkov E."/>
            <person name="Elzer P.H."/>
            <person name="Hagius S."/>
            <person name="O'Callaghan D."/>
            <person name="Letesson J.-J."/>
            <person name="Haselkorn R."/>
            <person name="Kyrpides N.C."/>
            <person name="Overbeek R."/>
        </authorList>
    </citation>
    <scope>NUCLEOTIDE SEQUENCE [LARGE SCALE GENOMIC DNA]</scope>
    <source>
        <strain>ATCC 23456 / CCUG 17765 / NCTC 10094 / 16M</strain>
    </source>
</reference>